<name>RL2_BORPE</name>
<evidence type="ECO:0000255" key="1">
    <source>
        <dbReference type="HAMAP-Rule" id="MF_01320"/>
    </source>
</evidence>
<evidence type="ECO:0000256" key="2">
    <source>
        <dbReference type="SAM" id="MobiDB-lite"/>
    </source>
</evidence>
<evidence type="ECO:0000305" key="3"/>
<keyword id="KW-1185">Reference proteome</keyword>
<keyword id="KW-0687">Ribonucleoprotein</keyword>
<keyword id="KW-0689">Ribosomal protein</keyword>
<keyword id="KW-0694">RNA-binding</keyword>
<keyword id="KW-0699">rRNA-binding</keyword>
<reference key="1">
    <citation type="journal article" date="2003" name="Nat. Genet.">
        <title>Comparative analysis of the genome sequences of Bordetella pertussis, Bordetella parapertussis and Bordetella bronchiseptica.</title>
        <authorList>
            <person name="Parkhill J."/>
            <person name="Sebaihia M."/>
            <person name="Preston A."/>
            <person name="Murphy L.D."/>
            <person name="Thomson N.R."/>
            <person name="Harris D.E."/>
            <person name="Holden M.T.G."/>
            <person name="Churcher C.M."/>
            <person name="Bentley S.D."/>
            <person name="Mungall K.L."/>
            <person name="Cerdeno-Tarraga A.-M."/>
            <person name="Temple L."/>
            <person name="James K.D."/>
            <person name="Harris B."/>
            <person name="Quail M.A."/>
            <person name="Achtman M."/>
            <person name="Atkin R."/>
            <person name="Baker S."/>
            <person name="Basham D."/>
            <person name="Bason N."/>
            <person name="Cherevach I."/>
            <person name="Chillingworth T."/>
            <person name="Collins M."/>
            <person name="Cronin A."/>
            <person name="Davis P."/>
            <person name="Doggett J."/>
            <person name="Feltwell T."/>
            <person name="Goble A."/>
            <person name="Hamlin N."/>
            <person name="Hauser H."/>
            <person name="Holroyd S."/>
            <person name="Jagels K."/>
            <person name="Leather S."/>
            <person name="Moule S."/>
            <person name="Norberczak H."/>
            <person name="O'Neil S."/>
            <person name="Ormond D."/>
            <person name="Price C."/>
            <person name="Rabbinowitsch E."/>
            <person name="Rutter S."/>
            <person name="Sanders M."/>
            <person name="Saunders D."/>
            <person name="Seeger K."/>
            <person name="Sharp S."/>
            <person name="Simmonds M."/>
            <person name="Skelton J."/>
            <person name="Squares R."/>
            <person name="Squares S."/>
            <person name="Stevens K."/>
            <person name="Unwin L."/>
            <person name="Whitehead S."/>
            <person name="Barrell B.G."/>
            <person name="Maskell D.J."/>
        </authorList>
    </citation>
    <scope>NUCLEOTIDE SEQUENCE [LARGE SCALE GENOMIC DNA]</scope>
    <source>
        <strain>Tohama I / ATCC BAA-589 / NCTC 13251</strain>
    </source>
</reference>
<gene>
    <name evidence="1" type="primary">rplB</name>
    <name type="ordered locus">BP3616</name>
</gene>
<proteinExistence type="inferred from homology"/>
<dbReference type="EMBL" id="BX640422">
    <property type="protein sequence ID" value="CAE43874.1"/>
    <property type="molecule type" value="Genomic_DNA"/>
</dbReference>
<dbReference type="RefSeq" id="NP_882126.1">
    <property type="nucleotide sequence ID" value="NC_002929.2"/>
</dbReference>
<dbReference type="RefSeq" id="WP_003806907.1">
    <property type="nucleotide sequence ID" value="NZ_CP039022.1"/>
</dbReference>
<dbReference type="SMR" id="Q7VTD0"/>
<dbReference type="STRING" id="257313.BP3616"/>
<dbReference type="PaxDb" id="257313-BP3616"/>
<dbReference type="GeneID" id="93206261"/>
<dbReference type="KEGG" id="bpe:BP3616"/>
<dbReference type="PATRIC" id="fig|257313.5.peg.3914"/>
<dbReference type="eggNOG" id="COG0090">
    <property type="taxonomic scope" value="Bacteria"/>
</dbReference>
<dbReference type="HOGENOM" id="CLU_036235_2_1_4"/>
<dbReference type="Proteomes" id="UP000002676">
    <property type="component" value="Chromosome"/>
</dbReference>
<dbReference type="GO" id="GO:0015934">
    <property type="term" value="C:large ribosomal subunit"/>
    <property type="evidence" value="ECO:0007669"/>
    <property type="project" value="InterPro"/>
</dbReference>
<dbReference type="GO" id="GO:0019843">
    <property type="term" value="F:rRNA binding"/>
    <property type="evidence" value="ECO:0007669"/>
    <property type="project" value="UniProtKB-UniRule"/>
</dbReference>
<dbReference type="GO" id="GO:0003735">
    <property type="term" value="F:structural constituent of ribosome"/>
    <property type="evidence" value="ECO:0007669"/>
    <property type="project" value="InterPro"/>
</dbReference>
<dbReference type="GO" id="GO:0016740">
    <property type="term" value="F:transferase activity"/>
    <property type="evidence" value="ECO:0007669"/>
    <property type="project" value="InterPro"/>
</dbReference>
<dbReference type="GO" id="GO:0002181">
    <property type="term" value="P:cytoplasmic translation"/>
    <property type="evidence" value="ECO:0007669"/>
    <property type="project" value="TreeGrafter"/>
</dbReference>
<dbReference type="FunFam" id="2.30.30.30:FF:000001">
    <property type="entry name" value="50S ribosomal protein L2"/>
    <property type="match status" value="1"/>
</dbReference>
<dbReference type="FunFam" id="2.40.50.140:FF:000003">
    <property type="entry name" value="50S ribosomal protein L2"/>
    <property type="match status" value="1"/>
</dbReference>
<dbReference type="FunFam" id="4.10.950.10:FF:000001">
    <property type="entry name" value="50S ribosomal protein L2"/>
    <property type="match status" value="1"/>
</dbReference>
<dbReference type="Gene3D" id="2.30.30.30">
    <property type="match status" value="1"/>
</dbReference>
<dbReference type="Gene3D" id="2.40.50.140">
    <property type="entry name" value="Nucleic acid-binding proteins"/>
    <property type="match status" value="1"/>
</dbReference>
<dbReference type="Gene3D" id="4.10.950.10">
    <property type="entry name" value="Ribosomal protein L2, domain 3"/>
    <property type="match status" value="1"/>
</dbReference>
<dbReference type="HAMAP" id="MF_01320_B">
    <property type="entry name" value="Ribosomal_uL2_B"/>
    <property type="match status" value="1"/>
</dbReference>
<dbReference type="InterPro" id="IPR012340">
    <property type="entry name" value="NA-bd_OB-fold"/>
</dbReference>
<dbReference type="InterPro" id="IPR014722">
    <property type="entry name" value="Rib_uL2_dom2"/>
</dbReference>
<dbReference type="InterPro" id="IPR002171">
    <property type="entry name" value="Ribosomal_uL2"/>
</dbReference>
<dbReference type="InterPro" id="IPR005880">
    <property type="entry name" value="Ribosomal_uL2_bac/org-type"/>
</dbReference>
<dbReference type="InterPro" id="IPR022669">
    <property type="entry name" value="Ribosomal_uL2_C"/>
</dbReference>
<dbReference type="InterPro" id="IPR022671">
    <property type="entry name" value="Ribosomal_uL2_CS"/>
</dbReference>
<dbReference type="InterPro" id="IPR014726">
    <property type="entry name" value="Ribosomal_uL2_dom3"/>
</dbReference>
<dbReference type="InterPro" id="IPR022666">
    <property type="entry name" value="Ribosomal_uL2_RNA-bd_dom"/>
</dbReference>
<dbReference type="InterPro" id="IPR008991">
    <property type="entry name" value="Translation_prot_SH3-like_sf"/>
</dbReference>
<dbReference type="NCBIfam" id="TIGR01171">
    <property type="entry name" value="rplB_bact"/>
    <property type="match status" value="1"/>
</dbReference>
<dbReference type="PANTHER" id="PTHR13691:SF5">
    <property type="entry name" value="LARGE RIBOSOMAL SUBUNIT PROTEIN UL2M"/>
    <property type="match status" value="1"/>
</dbReference>
<dbReference type="PANTHER" id="PTHR13691">
    <property type="entry name" value="RIBOSOMAL PROTEIN L2"/>
    <property type="match status" value="1"/>
</dbReference>
<dbReference type="Pfam" id="PF00181">
    <property type="entry name" value="Ribosomal_L2"/>
    <property type="match status" value="1"/>
</dbReference>
<dbReference type="Pfam" id="PF03947">
    <property type="entry name" value="Ribosomal_L2_C"/>
    <property type="match status" value="1"/>
</dbReference>
<dbReference type="PIRSF" id="PIRSF002158">
    <property type="entry name" value="Ribosomal_L2"/>
    <property type="match status" value="1"/>
</dbReference>
<dbReference type="SMART" id="SM01383">
    <property type="entry name" value="Ribosomal_L2"/>
    <property type="match status" value="1"/>
</dbReference>
<dbReference type="SMART" id="SM01382">
    <property type="entry name" value="Ribosomal_L2_C"/>
    <property type="match status" value="1"/>
</dbReference>
<dbReference type="SUPFAM" id="SSF50249">
    <property type="entry name" value="Nucleic acid-binding proteins"/>
    <property type="match status" value="1"/>
</dbReference>
<dbReference type="SUPFAM" id="SSF50104">
    <property type="entry name" value="Translation proteins SH3-like domain"/>
    <property type="match status" value="1"/>
</dbReference>
<dbReference type="PROSITE" id="PS00467">
    <property type="entry name" value="RIBOSOMAL_L2"/>
    <property type="match status" value="1"/>
</dbReference>
<accession>Q7VTD0</accession>
<organism>
    <name type="scientific">Bordetella pertussis (strain Tohama I / ATCC BAA-589 / NCTC 13251)</name>
    <dbReference type="NCBI Taxonomy" id="257313"/>
    <lineage>
        <taxon>Bacteria</taxon>
        <taxon>Pseudomonadati</taxon>
        <taxon>Pseudomonadota</taxon>
        <taxon>Betaproteobacteria</taxon>
        <taxon>Burkholderiales</taxon>
        <taxon>Alcaligenaceae</taxon>
        <taxon>Bordetella</taxon>
    </lineage>
</organism>
<comment type="function">
    <text evidence="1">One of the primary rRNA binding proteins. Required for association of the 30S and 50S subunits to form the 70S ribosome, for tRNA binding and peptide bond formation. It has been suggested to have peptidyltransferase activity; this is somewhat controversial. Makes several contacts with the 16S rRNA in the 70S ribosome.</text>
</comment>
<comment type="subunit">
    <text evidence="1">Part of the 50S ribosomal subunit. Forms a bridge to the 30S subunit in the 70S ribosome.</text>
</comment>
<comment type="similarity">
    <text evidence="1">Belongs to the universal ribosomal protein uL2 family.</text>
</comment>
<sequence length="275" mass="30189">MALVKVKPTSAGRRGMVKVVSPKLHKGAPHAALLEKKTRGSGRNNNGHITVRHRGGGHKQHYRVVDFRRNKDGIPAKVERLEYDPNRTAHIALLCYADGERRYIIAPRGLEVGATLISGIEAPIRAGNTLPIRNIPVGTTIHCIEMIPGKGAQMARSAGASAVLMAREGTYAQVRLRSGEVRRVHIQCRATIGEVGNEEHSLRQIGKAGAMRWRGVRPTVRGVAMNPIDHPHGGGEGRTGEAREPVSPWGTPAKGFKTRRNKRTNNMIVQRRKRK</sequence>
<protein>
    <recommendedName>
        <fullName evidence="1">Large ribosomal subunit protein uL2</fullName>
    </recommendedName>
    <alternativeName>
        <fullName evidence="3">50S ribosomal protein L2</fullName>
    </alternativeName>
</protein>
<feature type="chain" id="PRO_0000129535" description="Large ribosomal subunit protein uL2">
    <location>
        <begin position="1"/>
        <end position="275"/>
    </location>
</feature>
<feature type="region of interest" description="Disordered" evidence="2">
    <location>
        <begin position="38"/>
        <end position="59"/>
    </location>
</feature>
<feature type="region of interest" description="Disordered" evidence="2">
    <location>
        <begin position="223"/>
        <end position="275"/>
    </location>
</feature>
<feature type="compositionally biased region" description="Basic residues" evidence="2">
    <location>
        <begin position="50"/>
        <end position="59"/>
    </location>
</feature>
<feature type="compositionally biased region" description="Basic and acidic residues" evidence="2">
    <location>
        <begin position="229"/>
        <end position="244"/>
    </location>
</feature>